<name>RL25_ANAD2</name>
<evidence type="ECO:0000255" key="1">
    <source>
        <dbReference type="HAMAP-Rule" id="MF_01334"/>
    </source>
</evidence>
<evidence type="ECO:0000256" key="2">
    <source>
        <dbReference type="SAM" id="MobiDB-lite"/>
    </source>
</evidence>
<evidence type="ECO:0000305" key="3"/>
<proteinExistence type="inferred from homology"/>
<keyword id="KW-0687">Ribonucleoprotein</keyword>
<keyword id="KW-0689">Ribosomal protein</keyword>
<keyword id="KW-0694">RNA-binding</keyword>
<keyword id="KW-0699">rRNA-binding</keyword>
<protein>
    <recommendedName>
        <fullName evidence="1">Large ribosomal subunit protein bL25</fullName>
    </recommendedName>
    <alternativeName>
        <fullName evidence="3">50S ribosomal protein L25</fullName>
    </alternativeName>
    <alternativeName>
        <fullName evidence="1">General stress protein CTC</fullName>
    </alternativeName>
</protein>
<organism>
    <name type="scientific">Anaeromyxobacter dehalogenans (strain 2CP-1 / ATCC BAA-258)</name>
    <dbReference type="NCBI Taxonomy" id="455488"/>
    <lineage>
        <taxon>Bacteria</taxon>
        <taxon>Pseudomonadati</taxon>
        <taxon>Myxococcota</taxon>
        <taxon>Myxococcia</taxon>
        <taxon>Myxococcales</taxon>
        <taxon>Cystobacterineae</taxon>
        <taxon>Anaeromyxobacteraceae</taxon>
        <taxon>Anaeromyxobacter</taxon>
    </lineage>
</organism>
<comment type="function">
    <text evidence="1">This is one of the proteins that binds to the 5S RNA in the ribosome where it forms part of the central protuberance.</text>
</comment>
<comment type="subunit">
    <text evidence="1">Part of the 50S ribosomal subunit; part of the 5S rRNA/L5/L18/L25 subcomplex. Contacts the 5S rRNA. Binds to the 5S rRNA independently of L5 and L18.</text>
</comment>
<comment type="similarity">
    <text evidence="1">Belongs to the bacterial ribosomal protein bL25 family. CTC subfamily.</text>
</comment>
<gene>
    <name evidence="1" type="primary">rplY</name>
    <name evidence="1" type="synonym">ctc</name>
    <name type="ordered locus">A2cp1_0138</name>
</gene>
<sequence>MAENVLSAQKRTEQGKGPARRLRQQGLIPAVVYGGKREPTHVALDPATLLKAIETPHKFNTLLELQVDGASKHVLFKDYTVDPVTRKLLHADFLEVSMDQPVKVNVPVVTVGRAAGVAEGGILSVATHAIVVEALPNKIPVRIEVDVTELKIGRSLHVSELKAPEGCKFKFQTDYVVVFVAVPEKEEVAAPVAAAVPGAAPAEGAAPAAGAAAPAGGAAPAAGAAPAKGGEAKGGDKAKK</sequence>
<feature type="chain" id="PRO_1000166160" description="Large ribosomal subunit protein bL25">
    <location>
        <begin position="1"/>
        <end position="240"/>
    </location>
</feature>
<feature type="region of interest" description="Disordered" evidence="2">
    <location>
        <begin position="1"/>
        <end position="21"/>
    </location>
</feature>
<feature type="region of interest" description="Disordered" evidence="2">
    <location>
        <begin position="204"/>
        <end position="240"/>
    </location>
</feature>
<feature type="compositionally biased region" description="Low complexity" evidence="2">
    <location>
        <begin position="204"/>
        <end position="229"/>
    </location>
</feature>
<feature type="compositionally biased region" description="Basic and acidic residues" evidence="2">
    <location>
        <begin position="230"/>
        <end position="240"/>
    </location>
</feature>
<accession>B8J805</accession>
<dbReference type="EMBL" id="CP001359">
    <property type="protein sequence ID" value="ACL63497.1"/>
    <property type="molecule type" value="Genomic_DNA"/>
</dbReference>
<dbReference type="RefSeq" id="WP_012631581.1">
    <property type="nucleotide sequence ID" value="NC_011891.1"/>
</dbReference>
<dbReference type="SMR" id="B8J805"/>
<dbReference type="KEGG" id="acp:A2cp1_0138"/>
<dbReference type="HOGENOM" id="CLU_075939_2_1_7"/>
<dbReference type="Proteomes" id="UP000007089">
    <property type="component" value="Chromosome"/>
</dbReference>
<dbReference type="GO" id="GO:0022625">
    <property type="term" value="C:cytosolic large ribosomal subunit"/>
    <property type="evidence" value="ECO:0007669"/>
    <property type="project" value="TreeGrafter"/>
</dbReference>
<dbReference type="GO" id="GO:0008097">
    <property type="term" value="F:5S rRNA binding"/>
    <property type="evidence" value="ECO:0007669"/>
    <property type="project" value="InterPro"/>
</dbReference>
<dbReference type="GO" id="GO:0003735">
    <property type="term" value="F:structural constituent of ribosome"/>
    <property type="evidence" value="ECO:0007669"/>
    <property type="project" value="InterPro"/>
</dbReference>
<dbReference type="GO" id="GO:0006412">
    <property type="term" value="P:translation"/>
    <property type="evidence" value="ECO:0007669"/>
    <property type="project" value="UniProtKB-UniRule"/>
</dbReference>
<dbReference type="CDD" id="cd00495">
    <property type="entry name" value="Ribosomal_L25_TL5_CTC"/>
    <property type="match status" value="1"/>
</dbReference>
<dbReference type="Gene3D" id="2.170.120.20">
    <property type="entry name" value="Ribosomal protein L25, beta domain"/>
    <property type="match status" value="1"/>
</dbReference>
<dbReference type="Gene3D" id="2.40.240.10">
    <property type="entry name" value="Ribosomal Protein L25, Chain P"/>
    <property type="match status" value="1"/>
</dbReference>
<dbReference type="HAMAP" id="MF_01334">
    <property type="entry name" value="Ribosomal_bL25_CTC"/>
    <property type="match status" value="1"/>
</dbReference>
<dbReference type="InterPro" id="IPR020056">
    <property type="entry name" value="Rbsml_bL25/Gln-tRNA_synth_N"/>
</dbReference>
<dbReference type="InterPro" id="IPR011035">
    <property type="entry name" value="Ribosomal_bL25/Gln-tRNA_synth"/>
</dbReference>
<dbReference type="InterPro" id="IPR020057">
    <property type="entry name" value="Ribosomal_bL25_b-dom"/>
</dbReference>
<dbReference type="InterPro" id="IPR037121">
    <property type="entry name" value="Ribosomal_bL25_C"/>
</dbReference>
<dbReference type="InterPro" id="IPR001021">
    <property type="entry name" value="Ribosomal_bL25_long"/>
</dbReference>
<dbReference type="InterPro" id="IPR029751">
    <property type="entry name" value="Ribosomal_L25_dom"/>
</dbReference>
<dbReference type="InterPro" id="IPR020930">
    <property type="entry name" value="Ribosomal_uL5_bac-type"/>
</dbReference>
<dbReference type="NCBIfam" id="TIGR00731">
    <property type="entry name" value="bL25_bact_ctc"/>
    <property type="match status" value="1"/>
</dbReference>
<dbReference type="NCBIfam" id="NF004128">
    <property type="entry name" value="PRK05618.1-2"/>
    <property type="match status" value="1"/>
</dbReference>
<dbReference type="NCBIfam" id="NF004137">
    <property type="entry name" value="PRK05618.3-3"/>
    <property type="match status" value="1"/>
</dbReference>
<dbReference type="PANTHER" id="PTHR33284">
    <property type="entry name" value="RIBOSOMAL PROTEIN L25/GLN-TRNA SYNTHETASE, ANTI-CODON-BINDING DOMAIN-CONTAINING PROTEIN"/>
    <property type="match status" value="1"/>
</dbReference>
<dbReference type="PANTHER" id="PTHR33284:SF1">
    <property type="entry name" value="RIBOSOMAL PROTEIN L25_GLN-TRNA SYNTHETASE, ANTI-CODON-BINDING DOMAIN-CONTAINING PROTEIN"/>
    <property type="match status" value="1"/>
</dbReference>
<dbReference type="Pfam" id="PF01386">
    <property type="entry name" value="Ribosomal_L25p"/>
    <property type="match status" value="1"/>
</dbReference>
<dbReference type="Pfam" id="PF14693">
    <property type="entry name" value="Ribosomal_TL5_C"/>
    <property type="match status" value="1"/>
</dbReference>
<dbReference type="SUPFAM" id="SSF50715">
    <property type="entry name" value="Ribosomal protein L25-like"/>
    <property type="match status" value="1"/>
</dbReference>
<reference key="1">
    <citation type="submission" date="2009-01" db="EMBL/GenBank/DDBJ databases">
        <title>Complete sequence of Anaeromyxobacter dehalogenans 2CP-1.</title>
        <authorList>
            <person name="Lucas S."/>
            <person name="Copeland A."/>
            <person name="Lapidus A."/>
            <person name="Glavina del Rio T."/>
            <person name="Dalin E."/>
            <person name="Tice H."/>
            <person name="Bruce D."/>
            <person name="Goodwin L."/>
            <person name="Pitluck S."/>
            <person name="Saunders E."/>
            <person name="Brettin T."/>
            <person name="Detter J.C."/>
            <person name="Han C."/>
            <person name="Larimer F."/>
            <person name="Land M."/>
            <person name="Hauser L."/>
            <person name="Kyrpides N."/>
            <person name="Ovchinnikova G."/>
            <person name="Beliaev A.S."/>
            <person name="Richardson P."/>
        </authorList>
    </citation>
    <scope>NUCLEOTIDE SEQUENCE [LARGE SCALE GENOMIC DNA]</scope>
    <source>
        <strain>2CP-1 / ATCC BAA-258</strain>
    </source>
</reference>